<protein>
    <recommendedName>
        <fullName evidence="1">Holliday junction branch migration complex subunit RuvB</fullName>
        <ecNumber evidence="1">3.6.4.-</ecNumber>
    </recommendedName>
</protein>
<evidence type="ECO:0000255" key="1">
    <source>
        <dbReference type="HAMAP-Rule" id="MF_00016"/>
    </source>
</evidence>
<proteinExistence type="inferred from homology"/>
<keyword id="KW-0067">ATP-binding</keyword>
<keyword id="KW-0963">Cytoplasm</keyword>
<keyword id="KW-0227">DNA damage</keyword>
<keyword id="KW-0233">DNA recombination</keyword>
<keyword id="KW-0234">DNA repair</keyword>
<keyword id="KW-0238">DNA-binding</keyword>
<keyword id="KW-0378">Hydrolase</keyword>
<keyword id="KW-0547">Nucleotide-binding</keyword>
<organism>
    <name type="scientific">Haemophilus influenzae (strain 86-028NP)</name>
    <dbReference type="NCBI Taxonomy" id="281310"/>
    <lineage>
        <taxon>Bacteria</taxon>
        <taxon>Pseudomonadati</taxon>
        <taxon>Pseudomonadota</taxon>
        <taxon>Gammaproteobacteria</taxon>
        <taxon>Pasteurellales</taxon>
        <taxon>Pasteurellaceae</taxon>
        <taxon>Haemophilus</taxon>
    </lineage>
</organism>
<gene>
    <name evidence="1" type="primary">ruvB</name>
    <name type="ordered locus">NTHI0430</name>
</gene>
<feature type="chain" id="PRO_0000165538" description="Holliday junction branch migration complex subunit RuvB">
    <location>
        <begin position="1"/>
        <end position="335"/>
    </location>
</feature>
<feature type="region of interest" description="Large ATPase domain (RuvB-L)" evidence="1">
    <location>
        <begin position="4"/>
        <end position="184"/>
    </location>
</feature>
<feature type="region of interest" description="Small ATPAse domain (RuvB-S)" evidence="1">
    <location>
        <begin position="185"/>
        <end position="255"/>
    </location>
</feature>
<feature type="region of interest" description="Head domain (RuvB-H)" evidence="1">
    <location>
        <begin position="258"/>
        <end position="335"/>
    </location>
</feature>
<feature type="binding site" evidence="1">
    <location>
        <position position="23"/>
    </location>
    <ligand>
        <name>ATP</name>
        <dbReference type="ChEBI" id="CHEBI:30616"/>
    </ligand>
</feature>
<feature type="binding site" evidence="1">
    <location>
        <position position="24"/>
    </location>
    <ligand>
        <name>ATP</name>
        <dbReference type="ChEBI" id="CHEBI:30616"/>
    </ligand>
</feature>
<feature type="binding site" evidence="1">
    <location>
        <position position="65"/>
    </location>
    <ligand>
        <name>ATP</name>
        <dbReference type="ChEBI" id="CHEBI:30616"/>
    </ligand>
</feature>
<feature type="binding site" evidence="1">
    <location>
        <position position="68"/>
    </location>
    <ligand>
        <name>ATP</name>
        <dbReference type="ChEBI" id="CHEBI:30616"/>
    </ligand>
</feature>
<feature type="binding site" evidence="1">
    <location>
        <position position="69"/>
    </location>
    <ligand>
        <name>ATP</name>
        <dbReference type="ChEBI" id="CHEBI:30616"/>
    </ligand>
</feature>
<feature type="binding site" evidence="1">
    <location>
        <position position="69"/>
    </location>
    <ligand>
        <name>Mg(2+)</name>
        <dbReference type="ChEBI" id="CHEBI:18420"/>
    </ligand>
</feature>
<feature type="binding site" evidence="1">
    <location>
        <position position="70"/>
    </location>
    <ligand>
        <name>ATP</name>
        <dbReference type="ChEBI" id="CHEBI:30616"/>
    </ligand>
</feature>
<feature type="binding site" evidence="1">
    <location>
        <begin position="131"/>
        <end position="133"/>
    </location>
    <ligand>
        <name>ATP</name>
        <dbReference type="ChEBI" id="CHEBI:30616"/>
    </ligand>
</feature>
<feature type="binding site" evidence="1">
    <location>
        <position position="174"/>
    </location>
    <ligand>
        <name>ATP</name>
        <dbReference type="ChEBI" id="CHEBI:30616"/>
    </ligand>
</feature>
<feature type="binding site" evidence="1">
    <location>
        <position position="184"/>
    </location>
    <ligand>
        <name>ATP</name>
        <dbReference type="ChEBI" id="CHEBI:30616"/>
    </ligand>
</feature>
<feature type="binding site" evidence="1">
    <location>
        <position position="221"/>
    </location>
    <ligand>
        <name>ATP</name>
        <dbReference type="ChEBI" id="CHEBI:30616"/>
    </ligand>
</feature>
<feature type="binding site" evidence="1">
    <location>
        <position position="294"/>
    </location>
    <ligand>
        <name>DNA</name>
        <dbReference type="ChEBI" id="CHEBI:16991"/>
    </ligand>
</feature>
<feature type="binding site" evidence="1">
    <location>
        <position position="313"/>
    </location>
    <ligand>
        <name>DNA</name>
        <dbReference type="ChEBI" id="CHEBI:16991"/>
    </ligand>
</feature>
<feature type="binding site" evidence="1">
    <location>
        <position position="318"/>
    </location>
    <ligand>
        <name>DNA</name>
        <dbReference type="ChEBI" id="CHEBI:16991"/>
    </ligand>
</feature>
<comment type="function">
    <text evidence="1">The RuvA-RuvB-RuvC complex processes Holliday junction (HJ) DNA during genetic recombination and DNA repair, while the RuvA-RuvB complex plays an important role in the rescue of blocked DNA replication forks via replication fork reversal (RFR). RuvA specifically binds to HJ cruciform DNA, conferring on it an open structure. The RuvB hexamer acts as an ATP-dependent pump, pulling dsDNA into and through the RuvAB complex. RuvB forms 2 homohexamers on either side of HJ DNA bound by 1 or 2 RuvA tetramers; 4 subunits per hexamer contact DNA at a time. Coordinated motions by a converter formed by DNA-disengaged RuvB subunits stimulates ATP hydrolysis and nucleotide exchange. Immobilization of the converter enables RuvB to convert the ATP-contained energy into a lever motion, pulling 2 nucleotides of DNA out of the RuvA tetramer per ATP hydrolyzed, thus driving DNA branch migration. The RuvB motors rotate together with the DNA substrate, which together with the progressing nucleotide cycle form the mechanistic basis for DNA recombination by continuous HJ branch migration. Branch migration allows RuvC to scan DNA until it finds its consensus sequence, where it cleaves and resolves cruciform DNA.</text>
</comment>
<comment type="catalytic activity">
    <reaction evidence="1">
        <text>ATP + H2O = ADP + phosphate + H(+)</text>
        <dbReference type="Rhea" id="RHEA:13065"/>
        <dbReference type="ChEBI" id="CHEBI:15377"/>
        <dbReference type="ChEBI" id="CHEBI:15378"/>
        <dbReference type="ChEBI" id="CHEBI:30616"/>
        <dbReference type="ChEBI" id="CHEBI:43474"/>
        <dbReference type="ChEBI" id="CHEBI:456216"/>
    </reaction>
</comment>
<comment type="subunit">
    <text evidence="1">Homohexamer. Forms an RuvA(8)-RuvB(12)-Holliday junction (HJ) complex. HJ DNA is sandwiched between 2 RuvA tetramers; dsDNA enters through RuvA and exits via RuvB. An RuvB hexamer assembles on each DNA strand where it exits the tetramer. Each RuvB hexamer is contacted by two RuvA subunits (via domain III) on 2 adjacent RuvB subunits; this complex drives branch migration. In the full resolvosome a probable DNA-RuvA(4)-RuvB(12)-RuvC(2) complex forms which resolves the HJ.</text>
</comment>
<comment type="subcellular location">
    <subcellularLocation>
        <location evidence="1">Cytoplasm</location>
    </subcellularLocation>
</comment>
<comment type="domain">
    <text evidence="1">Has 3 domains, the large (RuvB-L) and small ATPase (RuvB-S) domains and the C-terminal head (RuvB-H) domain. The head domain binds DNA, while the ATPase domains jointly bind ATP, ADP or are empty depending on the state of the subunit in the translocation cycle. During a single DNA translocation step the structure of each domain remains the same, but their relative positions change.</text>
</comment>
<comment type="similarity">
    <text evidence="1">Belongs to the RuvB family.</text>
</comment>
<name>RUVB_HAEI8</name>
<accession>Q4QNM6</accession>
<dbReference type="EC" id="3.6.4.-" evidence="1"/>
<dbReference type="EMBL" id="CP000057">
    <property type="protein sequence ID" value="AAX87371.1"/>
    <property type="molecule type" value="Genomic_DNA"/>
</dbReference>
<dbReference type="RefSeq" id="WP_005649027.1">
    <property type="nucleotide sequence ID" value="NC_007146.2"/>
</dbReference>
<dbReference type="SMR" id="Q4QNM6"/>
<dbReference type="KEGG" id="hit:NTHI0430"/>
<dbReference type="HOGENOM" id="CLU_055599_1_0_6"/>
<dbReference type="Proteomes" id="UP000002525">
    <property type="component" value="Chromosome"/>
</dbReference>
<dbReference type="GO" id="GO:0005737">
    <property type="term" value="C:cytoplasm"/>
    <property type="evidence" value="ECO:0007669"/>
    <property type="project" value="UniProtKB-SubCell"/>
</dbReference>
<dbReference type="GO" id="GO:0048476">
    <property type="term" value="C:Holliday junction resolvase complex"/>
    <property type="evidence" value="ECO:0007669"/>
    <property type="project" value="UniProtKB-UniRule"/>
</dbReference>
<dbReference type="GO" id="GO:0005524">
    <property type="term" value="F:ATP binding"/>
    <property type="evidence" value="ECO:0007669"/>
    <property type="project" value="UniProtKB-UniRule"/>
</dbReference>
<dbReference type="GO" id="GO:0016887">
    <property type="term" value="F:ATP hydrolysis activity"/>
    <property type="evidence" value="ECO:0007669"/>
    <property type="project" value="InterPro"/>
</dbReference>
<dbReference type="GO" id="GO:0000400">
    <property type="term" value="F:four-way junction DNA binding"/>
    <property type="evidence" value="ECO:0007669"/>
    <property type="project" value="UniProtKB-UniRule"/>
</dbReference>
<dbReference type="GO" id="GO:0009378">
    <property type="term" value="F:four-way junction helicase activity"/>
    <property type="evidence" value="ECO:0007669"/>
    <property type="project" value="InterPro"/>
</dbReference>
<dbReference type="GO" id="GO:0006310">
    <property type="term" value="P:DNA recombination"/>
    <property type="evidence" value="ECO:0007669"/>
    <property type="project" value="UniProtKB-UniRule"/>
</dbReference>
<dbReference type="GO" id="GO:0006281">
    <property type="term" value="P:DNA repair"/>
    <property type="evidence" value="ECO:0007669"/>
    <property type="project" value="UniProtKB-UniRule"/>
</dbReference>
<dbReference type="CDD" id="cd00009">
    <property type="entry name" value="AAA"/>
    <property type="match status" value="1"/>
</dbReference>
<dbReference type="FunFam" id="1.10.10.10:FF:000086">
    <property type="entry name" value="Holliday junction ATP-dependent DNA helicase RuvB"/>
    <property type="match status" value="1"/>
</dbReference>
<dbReference type="FunFam" id="1.10.8.60:FF:000023">
    <property type="entry name" value="Holliday junction ATP-dependent DNA helicase RuvB"/>
    <property type="match status" value="1"/>
</dbReference>
<dbReference type="FunFam" id="3.40.50.300:FF:000073">
    <property type="entry name" value="Holliday junction ATP-dependent DNA helicase RuvB"/>
    <property type="match status" value="1"/>
</dbReference>
<dbReference type="Gene3D" id="1.10.8.60">
    <property type="match status" value="1"/>
</dbReference>
<dbReference type="Gene3D" id="3.40.50.300">
    <property type="entry name" value="P-loop containing nucleotide triphosphate hydrolases"/>
    <property type="match status" value="1"/>
</dbReference>
<dbReference type="Gene3D" id="1.10.10.10">
    <property type="entry name" value="Winged helix-like DNA-binding domain superfamily/Winged helix DNA-binding domain"/>
    <property type="match status" value="1"/>
</dbReference>
<dbReference type="HAMAP" id="MF_00016">
    <property type="entry name" value="DNA_HJ_migration_RuvB"/>
    <property type="match status" value="1"/>
</dbReference>
<dbReference type="InterPro" id="IPR003593">
    <property type="entry name" value="AAA+_ATPase"/>
</dbReference>
<dbReference type="InterPro" id="IPR041445">
    <property type="entry name" value="AAA_lid_4"/>
</dbReference>
<dbReference type="InterPro" id="IPR004605">
    <property type="entry name" value="DNA_helicase_Holl-junc_RuvB"/>
</dbReference>
<dbReference type="InterPro" id="IPR027417">
    <property type="entry name" value="P-loop_NTPase"/>
</dbReference>
<dbReference type="InterPro" id="IPR008824">
    <property type="entry name" value="RuvB-like_N"/>
</dbReference>
<dbReference type="InterPro" id="IPR008823">
    <property type="entry name" value="RuvB_C"/>
</dbReference>
<dbReference type="InterPro" id="IPR036388">
    <property type="entry name" value="WH-like_DNA-bd_sf"/>
</dbReference>
<dbReference type="InterPro" id="IPR036390">
    <property type="entry name" value="WH_DNA-bd_sf"/>
</dbReference>
<dbReference type="NCBIfam" id="NF000868">
    <property type="entry name" value="PRK00080.1"/>
    <property type="match status" value="1"/>
</dbReference>
<dbReference type="NCBIfam" id="TIGR00635">
    <property type="entry name" value="ruvB"/>
    <property type="match status" value="1"/>
</dbReference>
<dbReference type="PANTHER" id="PTHR42848">
    <property type="match status" value="1"/>
</dbReference>
<dbReference type="PANTHER" id="PTHR42848:SF1">
    <property type="entry name" value="HOLLIDAY JUNCTION BRANCH MIGRATION COMPLEX SUBUNIT RUVB"/>
    <property type="match status" value="1"/>
</dbReference>
<dbReference type="Pfam" id="PF17864">
    <property type="entry name" value="AAA_lid_4"/>
    <property type="match status" value="1"/>
</dbReference>
<dbReference type="Pfam" id="PF05491">
    <property type="entry name" value="RuvB_C"/>
    <property type="match status" value="1"/>
</dbReference>
<dbReference type="Pfam" id="PF05496">
    <property type="entry name" value="RuvB_N"/>
    <property type="match status" value="1"/>
</dbReference>
<dbReference type="SMART" id="SM00382">
    <property type="entry name" value="AAA"/>
    <property type="match status" value="1"/>
</dbReference>
<dbReference type="SUPFAM" id="SSF52540">
    <property type="entry name" value="P-loop containing nucleoside triphosphate hydrolases"/>
    <property type="match status" value="1"/>
</dbReference>
<dbReference type="SUPFAM" id="SSF46785">
    <property type="entry name" value="Winged helix' DNA-binding domain"/>
    <property type="match status" value="1"/>
</dbReference>
<sequence length="335" mass="37076">MIEADRIISGQAKVDEDVIDRAIRPKLLADYVGQPQVREQMDIFIKAAKLRQDALDHLLIFGPPGLGKTTLANIVANEMGVNIRTTSGPVLEKAGDLAAMLTNLEPHDVLFIDEIHRLSPAIEEVLYPAMEDYQLDIMIGEGPAARSIKLDLPPFTLVGATTRAGSLTSPLRDRFGIVQRLEFYSVEDLTSIVARSADCLNLELEQQAAFEVARRSRGTPRIANRLLRRVRDYADVRNGGIISINVAKQALSMLDVDDAGFDYLDRKLLSAVIERFDGGPVGLDNLAAAIGEERDTIEDVLEPYLIQQGFLQRTPRGRIATSQTYRHFGLQKLSD</sequence>
<reference key="1">
    <citation type="journal article" date="2005" name="J. Bacteriol.">
        <title>Genomic sequence of an otitis media isolate of nontypeable Haemophilus influenzae: comparative study with H. influenzae serotype d, strain KW20.</title>
        <authorList>
            <person name="Harrison A."/>
            <person name="Dyer D.W."/>
            <person name="Gillaspy A."/>
            <person name="Ray W.C."/>
            <person name="Mungur R."/>
            <person name="Carson M.B."/>
            <person name="Zhong H."/>
            <person name="Gipson J."/>
            <person name="Gipson M."/>
            <person name="Johnson L.S."/>
            <person name="Lewis L."/>
            <person name="Bakaletz L.O."/>
            <person name="Munson R.S. Jr."/>
        </authorList>
    </citation>
    <scope>NUCLEOTIDE SEQUENCE [LARGE SCALE GENOMIC DNA]</scope>
    <source>
        <strain>86-028NP</strain>
    </source>
</reference>